<protein>
    <recommendedName>
        <fullName evidence="1">Redox-sensing transcriptional repressor Rex</fullName>
    </recommendedName>
</protein>
<evidence type="ECO:0000255" key="1">
    <source>
        <dbReference type="HAMAP-Rule" id="MF_01131"/>
    </source>
</evidence>
<proteinExistence type="inferred from homology"/>
<reference key="1">
    <citation type="journal article" date="2006" name="Genome Res.">
        <title>Skewed genomic variability in strains of the toxigenic bacterial pathogen, Clostridium perfringens.</title>
        <authorList>
            <person name="Myers G.S.A."/>
            <person name="Rasko D.A."/>
            <person name="Cheung J.K."/>
            <person name="Ravel J."/>
            <person name="Seshadri R."/>
            <person name="DeBoy R.T."/>
            <person name="Ren Q."/>
            <person name="Varga J."/>
            <person name="Awad M.M."/>
            <person name="Brinkac L.M."/>
            <person name="Daugherty S.C."/>
            <person name="Haft D.H."/>
            <person name="Dodson R.J."/>
            <person name="Madupu R."/>
            <person name="Nelson W.C."/>
            <person name="Rosovitz M.J."/>
            <person name="Sullivan S.A."/>
            <person name="Khouri H."/>
            <person name="Dimitrov G.I."/>
            <person name="Watkins K.L."/>
            <person name="Mulligan S."/>
            <person name="Benton J."/>
            <person name="Radune D."/>
            <person name="Fisher D.J."/>
            <person name="Atkins H.S."/>
            <person name="Hiscox T."/>
            <person name="Jost B.H."/>
            <person name="Billington S.J."/>
            <person name="Songer J.G."/>
            <person name="McClane B.A."/>
            <person name="Titball R.W."/>
            <person name="Rood J.I."/>
            <person name="Melville S.B."/>
            <person name="Paulsen I.T."/>
        </authorList>
    </citation>
    <scope>NUCLEOTIDE SEQUENCE [LARGE SCALE GENOMIC DNA]</scope>
    <source>
        <strain>ATCC 13124 / DSM 756 / JCM 1290 / NCIMB 6125 / NCTC 8237 / S 107 / Type A</strain>
    </source>
</reference>
<name>REX_CLOP1</name>
<dbReference type="EMBL" id="CP000246">
    <property type="protein sequence ID" value="ABG83518.1"/>
    <property type="molecule type" value="Genomic_DNA"/>
</dbReference>
<dbReference type="RefSeq" id="WP_003454253.1">
    <property type="nucleotide sequence ID" value="NC_008261.1"/>
</dbReference>
<dbReference type="SMR" id="Q0TN14"/>
<dbReference type="STRING" id="195103.CPF_2586"/>
<dbReference type="PaxDb" id="195103-CPF_2586"/>
<dbReference type="KEGG" id="cpf:CPF_2586"/>
<dbReference type="eggNOG" id="COG2344">
    <property type="taxonomic scope" value="Bacteria"/>
</dbReference>
<dbReference type="HOGENOM" id="CLU_061534_1_0_9"/>
<dbReference type="Proteomes" id="UP000001823">
    <property type="component" value="Chromosome"/>
</dbReference>
<dbReference type="GO" id="GO:0005737">
    <property type="term" value="C:cytoplasm"/>
    <property type="evidence" value="ECO:0007669"/>
    <property type="project" value="UniProtKB-SubCell"/>
</dbReference>
<dbReference type="GO" id="GO:0003677">
    <property type="term" value="F:DNA binding"/>
    <property type="evidence" value="ECO:0007669"/>
    <property type="project" value="UniProtKB-UniRule"/>
</dbReference>
<dbReference type="GO" id="GO:0003700">
    <property type="term" value="F:DNA-binding transcription factor activity"/>
    <property type="evidence" value="ECO:0007669"/>
    <property type="project" value="UniProtKB-UniRule"/>
</dbReference>
<dbReference type="GO" id="GO:0045892">
    <property type="term" value="P:negative regulation of DNA-templated transcription"/>
    <property type="evidence" value="ECO:0007669"/>
    <property type="project" value="InterPro"/>
</dbReference>
<dbReference type="GO" id="GO:0051775">
    <property type="term" value="P:response to redox state"/>
    <property type="evidence" value="ECO:0007669"/>
    <property type="project" value="InterPro"/>
</dbReference>
<dbReference type="Gene3D" id="3.40.50.720">
    <property type="entry name" value="NAD(P)-binding Rossmann-like Domain"/>
    <property type="match status" value="1"/>
</dbReference>
<dbReference type="Gene3D" id="1.10.10.10">
    <property type="entry name" value="Winged helix-like DNA-binding domain superfamily/Winged helix DNA-binding domain"/>
    <property type="match status" value="1"/>
</dbReference>
<dbReference type="HAMAP" id="MF_01131">
    <property type="entry name" value="Rex"/>
    <property type="match status" value="1"/>
</dbReference>
<dbReference type="InterPro" id="IPR003781">
    <property type="entry name" value="CoA-bd"/>
</dbReference>
<dbReference type="InterPro" id="IPR036291">
    <property type="entry name" value="NAD(P)-bd_dom_sf"/>
</dbReference>
<dbReference type="InterPro" id="IPR009718">
    <property type="entry name" value="Rex_DNA-bd_C_dom"/>
</dbReference>
<dbReference type="InterPro" id="IPR022876">
    <property type="entry name" value="Tscrpt_rep_Rex"/>
</dbReference>
<dbReference type="InterPro" id="IPR036388">
    <property type="entry name" value="WH-like_DNA-bd_sf"/>
</dbReference>
<dbReference type="InterPro" id="IPR036390">
    <property type="entry name" value="WH_DNA-bd_sf"/>
</dbReference>
<dbReference type="NCBIfam" id="NF003989">
    <property type="entry name" value="PRK05472.1-3"/>
    <property type="match status" value="1"/>
</dbReference>
<dbReference type="NCBIfam" id="NF003990">
    <property type="entry name" value="PRK05472.1-4"/>
    <property type="match status" value="1"/>
</dbReference>
<dbReference type="NCBIfam" id="NF003993">
    <property type="entry name" value="PRK05472.2-2"/>
    <property type="match status" value="1"/>
</dbReference>
<dbReference type="NCBIfam" id="NF003994">
    <property type="entry name" value="PRK05472.2-3"/>
    <property type="match status" value="1"/>
</dbReference>
<dbReference type="NCBIfam" id="NF003995">
    <property type="entry name" value="PRK05472.2-4"/>
    <property type="match status" value="1"/>
</dbReference>
<dbReference type="NCBIfam" id="NF003996">
    <property type="entry name" value="PRK05472.2-5"/>
    <property type="match status" value="1"/>
</dbReference>
<dbReference type="PANTHER" id="PTHR35786">
    <property type="entry name" value="REDOX-SENSING TRANSCRIPTIONAL REPRESSOR REX"/>
    <property type="match status" value="1"/>
</dbReference>
<dbReference type="PANTHER" id="PTHR35786:SF1">
    <property type="entry name" value="REDOX-SENSING TRANSCRIPTIONAL REPRESSOR REX 1"/>
    <property type="match status" value="1"/>
</dbReference>
<dbReference type="Pfam" id="PF02629">
    <property type="entry name" value="CoA_binding"/>
    <property type="match status" value="1"/>
</dbReference>
<dbReference type="Pfam" id="PF06971">
    <property type="entry name" value="Put_DNA-bind_N"/>
    <property type="match status" value="1"/>
</dbReference>
<dbReference type="SMART" id="SM00881">
    <property type="entry name" value="CoA_binding"/>
    <property type="match status" value="1"/>
</dbReference>
<dbReference type="SUPFAM" id="SSF51735">
    <property type="entry name" value="NAD(P)-binding Rossmann-fold domains"/>
    <property type="match status" value="1"/>
</dbReference>
<dbReference type="SUPFAM" id="SSF46785">
    <property type="entry name" value="Winged helix' DNA-binding domain"/>
    <property type="match status" value="1"/>
</dbReference>
<organism>
    <name type="scientific">Clostridium perfringens (strain ATCC 13124 / DSM 756 / JCM 1290 / NCIMB 6125 / NCTC 8237 / Type A)</name>
    <dbReference type="NCBI Taxonomy" id="195103"/>
    <lineage>
        <taxon>Bacteria</taxon>
        <taxon>Bacillati</taxon>
        <taxon>Bacillota</taxon>
        <taxon>Clostridia</taxon>
        <taxon>Eubacteriales</taxon>
        <taxon>Clostridiaceae</taxon>
        <taxon>Clostridium</taxon>
    </lineage>
</organism>
<feature type="chain" id="PRO_1000065398" description="Redox-sensing transcriptional repressor Rex">
    <location>
        <begin position="1"/>
        <end position="212"/>
    </location>
</feature>
<feature type="DNA-binding region" description="H-T-H motif" evidence="1">
    <location>
        <begin position="17"/>
        <end position="56"/>
    </location>
</feature>
<feature type="binding site" evidence="1">
    <location>
        <begin position="91"/>
        <end position="96"/>
    </location>
    <ligand>
        <name>NAD(+)</name>
        <dbReference type="ChEBI" id="CHEBI:57540"/>
    </ligand>
</feature>
<gene>
    <name evidence="1" type="primary">rex</name>
    <name type="ordered locus">CPF_2586</name>
</gene>
<comment type="function">
    <text evidence="1">Modulates transcription in response to changes in cellular NADH/NAD(+) redox state.</text>
</comment>
<comment type="subunit">
    <text evidence="1">Homodimer.</text>
</comment>
<comment type="subcellular location">
    <subcellularLocation>
        <location evidence="1">Cytoplasm</location>
    </subcellularLocation>
</comment>
<comment type="similarity">
    <text evidence="1">Belongs to the transcriptional regulatory Rex family.</text>
</comment>
<keyword id="KW-0963">Cytoplasm</keyword>
<keyword id="KW-0238">DNA-binding</keyword>
<keyword id="KW-0520">NAD</keyword>
<keyword id="KW-0678">Repressor</keyword>
<keyword id="KW-0804">Transcription</keyword>
<keyword id="KW-0805">Transcription regulation</keyword>
<accession>Q0TN14</accession>
<sequence length="212" mass="24093">MEKKKGISMAVIKRLPKYHRYLQELMENDVDRISSKELSEKIGFTASQIRQDLNCFGDFGQQGYGYNVKELYNNIGSILGLTRDYNTVIIGAGNIGQAIANYNSFNRLGFKLKGIFDANPRMFGIKIRDVEIQDVEKLKDFVKENDIEIGIICVPRTNAQKVCNDLVEGGIKGIWNFAPIDLEVPKDIRVENVHLSESMMTLVYLLNHNDVK</sequence>